<dbReference type="EC" id="5.1.1.3" evidence="1"/>
<dbReference type="EMBL" id="CP000241">
    <property type="protein sequence ID" value="ABF84594.1"/>
    <property type="molecule type" value="Genomic_DNA"/>
</dbReference>
<dbReference type="RefSeq" id="WP_000690289.1">
    <property type="nucleotide sequence ID" value="NC_008086.1"/>
</dbReference>
<dbReference type="SMR" id="Q1CTX8"/>
<dbReference type="KEGG" id="hpa:HPAG1_0527"/>
<dbReference type="HOGENOM" id="CLU_052344_0_2_7"/>
<dbReference type="UniPathway" id="UPA00219"/>
<dbReference type="GO" id="GO:0008881">
    <property type="term" value="F:glutamate racemase activity"/>
    <property type="evidence" value="ECO:0007669"/>
    <property type="project" value="UniProtKB-UniRule"/>
</dbReference>
<dbReference type="GO" id="GO:0071555">
    <property type="term" value="P:cell wall organization"/>
    <property type="evidence" value="ECO:0007669"/>
    <property type="project" value="UniProtKB-KW"/>
</dbReference>
<dbReference type="GO" id="GO:0009252">
    <property type="term" value="P:peptidoglycan biosynthetic process"/>
    <property type="evidence" value="ECO:0007669"/>
    <property type="project" value="UniProtKB-UniRule"/>
</dbReference>
<dbReference type="GO" id="GO:0008360">
    <property type="term" value="P:regulation of cell shape"/>
    <property type="evidence" value="ECO:0007669"/>
    <property type="project" value="UniProtKB-KW"/>
</dbReference>
<dbReference type="FunFam" id="3.40.50.1860:FF:000001">
    <property type="entry name" value="Glutamate racemase"/>
    <property type="match status" value="1"/>
</dbReference>
<dbReference type="Gene3D" id="3.40.50.1860">
    <property type="match status" value="2"/>
</dbReference>
<dbReference type="HAMAP" id="MF_00258">
    <property type="entry name" value="Glu_racemase"/>
    <property type="match status" value="1"/>
</dbReference>
<dbReference type="InterPro" id="IPR015942">
    <property type="entry name" value="Asp/Glu/hydantoin_racemase"/>
</dbReference>
<dbReference type="InterPro" id="IPR001920">
    <property type="entry name" value="Asp/Glu_race"/>
</dbReference>
<dbReference type="InterPro" id="IPR018187">
    <property type="entry name" value="Asp/Glu_racemase_AS_1"/>
</dbReference>
<dbReference type="InterPro" id="IPR033134">
    <property type="entry name" value="Asp/Glu_racemase_AS_2"/>
</dbReference>
<dbReference type="InterPro" id="IPR004391">
    <property type="entry name" value="Glu_race"/>
</dbReference>
<dbReference type="NCBIfam" id="TIGR00067">
    <property type="entry name" value="glut_race"/>
    <property type="match status" value="1"/>
</dbReference>
<dbReference type="PANTHER" id="PTHR21198">
    <property type="entry name" value="GLUTAMATE RACEMASE"/>
    <property type="match status" value="1"/>
</dbReference>
<dbReference type="PANTHER" id="PTHR21198:SF2">
    <property type="entry name" value="GLUTAMATE RACEMASE"/>
    <property type="match status" value="1"/>
</dbReference>
<dbReference type="Pfam" id="PF01177">
    <property type="entry name" value="Asp_Glu_race"/>
    <property type="match status" value="1"/>
</dbReference>
<dbReference type="SUPFAM" id="SSF53681">
    <property type="entry name" value="Aspartate/glutamate racemase"/>
    <property type="match status" value="2"/>
</dbReference>
<dbReference type="PROSITE" id="PS00923">
    <property type="entry name" value="ASP_GLU_RACEMASE_1"/>
    <property type="match status" value="1"/>
</dbReference>
<dbReference type="PROSITE" id="PS00924">
    <property type="entry name" value="ASP_GLU_RACEMASE_2"/>
    <property type="match status" value="1"/>
</dbReference>
<organism>
    <name type="scientific">Helicobacter pylori (strain HPAG1)</name>
    <dbReference type="NCBI Taxonomy" id="357544"/>
    <lineage>
        <taxon>Bacteria</taxon>
        <taxon>Pseudomonadati</taxon>
        <taxon>Campylobacterota</taxon>
        <taxon>Epsilonproteobacteria</taxon>
        <taxon>Campylobacterales</taxon>
        <taxon>Helicobacteraceae</taxon>
        <taxon>Helicobacter</taxon>
    </lineage>
</organism>
<keyword id="KW-0133">Cell shape</keyword>
<keyword id="KW-0961">Cell wall biogenesis/degradation</keyword>
<keyword id="KW-0413">Isomerase</keyword>
<keyword id="KW-0573">Peptidoglycan synthesis</keyword>
<protein>
    <recommendedName>
        <fullName evidence="1">Glutamate racemase</fullName>
        <ecNumber evidence="1">5.1.1.3</ecNumber>
    </recommendedName>
</protein>
<proteinExistence type="inferred from homology"/>
<name>MURI_HELPH</name>
<sequence>MKIGVFDSGVGGFSVLKSLLKAQIFDEIIYYGDSARVPYGTKDPTTIKQFGLEALDFFKPHQIKLLIVACNTASALALEEMQKHSKIPIVGVIEPSILAIKQQVKDKNAPILVLGTKATIQSNAYDNALKQQGYLNVSHLATSLFVPLIEESILEGELLETCMRYYFTPLEILPEVVILGCTHFPLIAQKIEGYFMEHFALSTPPLLIHSGDAIVGYLQQKYALKKNACAFPKVEFHASGDVVWLEKQAKEWLKL</sequence>
<reference key="1">
    <citation type="journal article" date="2006" name="Proc. Natl. Acad. Sci. U.S.A.">
        <title>The complete genome sequence of a chronic atrophic gastritis Helicobacter pylori strain: evolution during disease progression.</title>
        <authorList>
            <person name="Oh J.D."/>
            <person name="Kling-Baeckhed H."/>
            <person name="Giannakis M."/>
            <person name="Xu J."/>
            <person name="Fulton R.S."/>
            <person name="Fulton L.A."/>
            <person name="Cordum H.S."/>
            <person name="Wang C."/>
            <person name="Elliott G."/>
            <person name="Edwards J."/>
            <person name="Mardis E.R."/>
            <person name="Engstrand L.G."/>
            <person name="Gordon J.I."/>
        </authorList>
    </citation>
    <scope>NUCLEOTIDE SEQUENCE [LARGE SCALE GENOMIC DNA]</scope>
    <source>
        <strain>HPAG1</strain>
    </source>
</reference>
<accession>Q1CTX8</accession>
<evidence type="ECO:0000255" key="1">
    <source>
        <dbReference type="HAMAP-Rule" id="MF_00258"/>
    </source>
</evidence>
<feature type="chain" id="PRO_1000047573" description="Glutamate racemase">
    <location>
        <begin position="1"/>
        <end position="255"/>
    </location>
</feature>
<feature type="active site" description="Proton donor/acceptor" evidence="1">
    <location>
        <position position="70"/>
    </location>
</feature>
<feature type="active site" description="Proton donor/acceptor" evidence="1">
    <location>
        <position position="181"/>
    </location>
</feature>
<feature type="binding site" evidence="1">
    <location>
        <begin position="7"/>
        <end position="8"/>
    </location>
    <ligand>
        <name>substrate</name>
    </ligand>
</feature>
<feature type="binding site" evidence="1">
    <location>
        <begin position="39"/>
        <end position="40"/>
    </location>
    <ligand>
        <name>substrate</name>
    </ligand>
</feature>
<feature type="binding site" evidence="1">
    <location>
        <begin position="71"/>
        <end position="72"/>
    </location>
    <ligand>
        <name>substrate</name>
    </ligand>
</feature>
<feature type="binding site" evidence="1">
    <location>
        <begin position="182"/>
        <end position="183"/>
    </location>
    <ligand>
        <name>substrate</name>
    </ligand>
</feature>
<gene>
    <name evidence="1" type="primary">murI</name>
    <name type="ordered locus">HPAG1_0527</name>
</gene>
<comment type="function">
    <text evidence="1">Provides the (R)-glutamate required for cell wall biosynthesis.</text>
</comment>
<comment type="catalytic activity">
    <reaction evidence="1">
        <text>L-glutamate = D-glutamate</text>
        <dbReference type="Rhea" id="RHEA:12813"/>
        <dbReference type="ChEBI" id="CHEBI:29985"/>
        <dbReference type="ChEBI" id="CHEBI:29986"/>
        <dbReference type="EC" id="5.1.1.3"/>
    </reaction>
</comment>
<comment type="pathway">
    <text evidence="1">Cell wall biogenesis; peptidoglycan biosynthesis.</text>
</comment>
<comment type="similarity">
    <text evidence="1">Belongs to the aspartate/glutamate racemases family.</text>
</comment>